<accession>B4SRE2</accession>
<keyword id="KW-0963">Cytoplasm</keyword>
<keyword id="KW-0489">Methyltransferase</keyword>
<keyword id="KW-0698">rRNA processing</keyword>
<keyword id="KW-0949">S-adenosyl-L-methionine</keyword>
<keyword id="KW-0808">Transferase</keyword>
<dbReference type="EC" id="2.1.1.177" evidence="1"/>
<dbReference type="EMBL" id="CP001111">
    <property type="protein sequence ID" value="ACF52606.1"/>
    <property type="molecule type" value="Genomic_DNA"/>
</dbReference>
<dbReference type="RefSeq" id="WP_012511763.1">
    <property type="nucleotide sequence ID" value="NC_011071.1"/>
</dbReference>
<dbReference type="SMR" id="B4SRE2"/>
<dbReference type="STRING" id="391008.Smal_2907"/>
<dbReference type="KEGG" id="smt:Smal_2907"/>
<dbReference type="eggNOG" id="COG1576">
    <property type="taxonomic scope" value="Bacteria"/>
</dbReference>
<dbReference type="HOGENOM" id="CLU_100552_1_0_6"/>
<dbReference type="OrthoDB" id="9806643at2"/>
<dbReference type="Proteomes" id="UP000001867">
    <property type="component" value="Chromosome"/>
</dbReference>
<dbReference type="GO" id="GO:0005737">
    <property type="term" value="C:cytoplasm"/>
    <property type="evidence" value="ECO:0007669"/>
    <property type="project" value="UniProtKB-SubCell"/>
</dbReference>
<dbReference type="GO" id="GO:0070038">
    <property type="term" value="F:rRNA (pseudouridine-N3-)-methyltransferase activity"/>
    <property type="evidence" value="ECO:0007669"/>
    <property type="project" value="UniProtKB-UniRule"/>
</dbReference>
<dbReference type="CDD" id="cd18081">
    <property type="entry name" value="RlmH-like"/>
    <property type="match status" value="1"/>
</dbReference>
<dbReference type="Gene3D" id="3.40.1280.10">
    <property type="match status" value="1"/>
</dbReference>
<dbReference type="HAMAP" id="MF_00658">
    <property type="entry name" value="23SrRNA_methyltr_H"/>
    <property type="match status" value="1"/>
</dbReference>
<dbReference type="InterPro" id="IPR029028">
    <property type="entry name" value="Alpha/beta_knot_MTases"/>
</dbReference>
<dbReference type="InterPro" id="IPR003742">
    <property type="entry name" value="RlmH-like"/>
</dbReference>
<dbReference type="InterPro" id="IPR029026">
    <property type="entry name" value="tRNA_m1G_MTases_N"/>
</dbReference>
<dbReference type="NCBIfam" id="NF000986">
    <property type="entry name" value="PRK00103.1-4"/>
    <property type="match status" value="1"/>
</dbReference>
<dbReference type="NCBIfam" id="TIGR00246">
    <property type="entry name" value="tRNA_RlmH_YbeA"/>
    <property type="match status" value="1"/>
</dbReference>
<dbReference type="PANTHER" id="PTHR33603">
    <property type="entry name" value="METHYLTRANSFERASE"/>
    <property type="match status" value="1"/>
</dbReference>
<dbReference type="PANTHER" id="PTHR33603:SF1">
    <property type="entry name" value="RIBOSOMAL RNA LARGE SUBUNIT METHYLTRANSFERASE H"/>
    <property type="match status" value="1"/>
</dbReference>
<dbReference type="Pfam" id="PF02590">
    <property type="entry name" value="SPOUT_MTase"/>
    <property type="match status" value="1"/>
</dbReference>
<dbReference type="PIRSF" id="PIRSF004505">
    <property type="entry name" value="MT_bac"/>
    <property type="match status" value="1"/>
</dbReference>
<dbReference type="SUPFAM" id="SSF75217">
    <property type="entry name" value="alpha/beta knot"/>
    <property type="match status" value="1"/>
</dbReference>
<sequence>MKARLIATGERAPSWVAQGFAEYQKRLSHWLPFELVEIEPGLRGKGRDPRRATEDEGKRVIAALPKNAYVVALDVPGRQLSSEQLAQRLEHWRGQGRDLAFLIGGPEGHSPEVSALADEKWSIGPLTLPHMLVRLVVAEQLYRAAAMLANHPYHRA</sequence>
<proteinExistence type="inferred from homology"/>
<name>RLMH_STRM5</name>
<organism>
    <name type="scientific">Stenotrophomonas maltophilia (strain R551-3)</name>
    <dbReference type="NCBI Taxonomy" id="391008"/>
    <lineage>
        <taxon>Bacteria</taxon>
        <taxon>Pseudomonadati</taxon>
        <taxon>Pseudomonadota</taxon>
        <taxon>Gammaproteobacteria</taxon>
        <taxon>Lysobacterales</taxon>
        <taxon>Lysobacteraceae</taxon>
        <taxon>Stenotrophomonas</taxon>
        <taxon>Stenotrophomonas maltophilia group</taxon>
    </lineage>
</organism>
<reference key="1">
    <citation type="submission" date="2008-06" db="EMBL/GenBank/DDBJ databases">
        <title>Complete sequence of Stenotrophomonas maltophilia R551-3.</title>
        <authorList>
            <consortium name="US DOE Joint Genome Institute"/>
            <person name="Lucas S."/>
            <person name="Copeland A."/>
            <person name="Lapidus A."/>
            <person name="Glavina del Rio T."/>
            <person name="Dalin E."/>
            <person name="Tice H."/>
            <person name="Pitluck S."/>
            <person name="Chain P."/>
            <person name="Malfatti S."/>
            <person name="Shin M."/>
            <person name="Vergez L."/>
            <person name="Lang D."/>
            <person name="Schmutz J."/>
            <person name="Larimer F."/>
            <person name="Land M."/>
            <person name="Hauser L."/>
            <person name="Kyrpides N."/>
            <person name="Mikhailova N."/>
            <person name="Taghavi S."/>
            <person name="Monchy S."/>
            <person name="Newman L."/>
            <person name="Vangronsveld J."/>
            <person name="van der Lelie D."/>
            <person name="Richardson P."/>
        </authorList>
    </citation>
    <scope>NUCLEOTIDE SEQUENCE [LARGE SCALE GENOMIC DNA]</scope>
    <source>
        <strain>R551-3</strain>
    </source>
</reference>
<gene>
    <name evidence="1" type="primary">rlmH</name>
    <name type="ordered locus">Smal_2907</name>
</gene>
<comment type="function">
    <text evidence="1">Specifically methylates the pseudouridine at position 1915 (m3Psi1915) in 23S rRNA.</text>
</comment>
<comment type="catalytic activity">
    <reaction evidence="1">
        <text>pseudouridine(1915) in 23S rRNA + S-adenosyl-L-methionine = N(3)-methylpseudouridine(1915) in 23S rRNA + S-adenosyl-L-homocysteine + H(+)</text>
        <dbReference type="Rhea" id="RHEA:42752"/>
        <dbReference type="Rhea" id="RHEA-COMP:10221"/>
        <dbReference type="Rhea" id="RHEA-COMP:10222"/>
        <dbReference type="ChEBI" id="CHEBI:15378"/>
        <dbReference type="ChEBI" id="CHEBI:57856"/>
        <dbReference type="ChEBI" id="CHEBI:59789"/>
        <dbReference type="ChEBI" id="CHEBI:65314"/>
        <dbReference type="ChEBI" id="CHEBI:74486"/>
        <dbReference type="EC" id="2.1.1.177"/>
    </reaction>
</comment>
<comment type="subunit">
    <text evidence="1">Homodimer.</text>
</comment>
<comment type="subcellular location">
    <subcellularLocation>
        <location evidence="1">Cytoplasm</location>
    </subcellularLocation>
</comment>
<comment type="similarity">
    <text evidence="1">Belongs to the RNA methyltransferase RlmH family.</text>
</comment>
<protein>
    <recommendedName>
        <fullName evidence="1">Ribosomal RNA large subunit methyltransferase H</fullName>
        <ecNumber evidence="1">2.1.1.177</ecNumber>
    </recommendedName>
    <alternativeName>
        <fullName evidence="1">23S rRNA (pseudouridine1915-N3)-methyltransferase</fullName>
    </alternativeName>
    <alternativeName>
        <fullName evidence="1">23S rRNA m3Psi1915 methyltransferase</fullName>
    </alternativeName>
    <alternativeName>
        <fullName evidence="1">rRNA (pseudouridine-N3-)-methyltransferase RlmH</fullName>
    </alternativeName>
</protein>
<evidence type="ECO:0000255" key="1">
    <source>
        <dbReference type="HAMAP-Rule" id="MF_00658"/>
    </source>
</evidence>
<feature type="chain" id="PRO_0000366659" description="Ribosomal RNA large subunit methyltransferase H">
    <location>
        <begin position="1"/>
        <end position="156"/>
    </location>
</feature>
<feature type="binding site" evidence="1">
    <location>
        <position position="73"/>
    </location>
    <ligand>
        <name>S-adenosyl-L-methionine</name>
        <dbReference type="ChEBI" id="CHEBI:59789"/>
    </ligand>
</feature>
<feature type="binding site" evidence="1">
    <location>
        <position position="104"/>
    </location>
    <ligand>
        <name>S-adenosyl-L-methionine</name>
        <dbReference type="ChEBI" id="CHEBI:59789"/>
    </ligand>
</feature>
<feature type="binding site" evidence="1">
    <location>
        <begin position="123"/>
        <end position="128"/>
    </location>
    <ligand>
        <name>S-adenosyl-L-methionine</name>
        <dbReference type="ChEBI" id="CHEBI:59789"/>
    </ligand>
</feature>